<organism>
    <name type="scientific">Pseudaphritis urvillii</name>
    <name type="common">Congolli</name>
    <name type="synonym">Freshwater flathead</name>
    <dbReference type="NCBI Taxonomy" id="56722"/>
    <lineage>
        <taxon>Eukaryota</taxon>
        <taxon>Metazoa</taxon>
        <taxon>Chordata</taxon>
        <taxon>Craniata</taxon>
        <taxon>Vertebrata</taxon>
        <taxon>Euteleostomi</taxon>
        <taxon>Actinopterygii</taxon>
        <taxon>Neopterygii</taxon>
        <taxon>Teleostei</taxon>
        <taxon>Neoteleostei</taxon>
        <taxon>Acanthomorphata</taxon>
        <taxon>Eupercaria</taxon>
        <taxon>Perciformes</taxon>
        <taxon>Notothenioidei</taxon>
        <taxon>Pseudaphritis</taxon>
    </lineage>
</organism>
<evidence type="ECO:0000250" key="1">
    <source>
        <dbReference type="UniProtKB" id="P80044"/>
    </source>
</evidence>
<evidence type="ECO:0000255" key="2">
    <source>
        <dbReference type="PROSITE-ProRule" id="PRU00238"/>
    </source>
</evidence>
<evidence type="ECO:0000269" key="3">
    <source>
    </source>
</evidence>
<evidence type="ECO:0000305" key="4"/>
<comment type="function">
    <text>Involved in oxygen transport from gills to the various peripheral tissues.</text>
</comment>
<comment type="subunit">
    <text evidence="3">Hb2 is a heterotetramer of two alpha chains and two beta-2 chains.</text>
</comment>
<comment type="tissue specificity">
    <text evidence="4">Red blood cells.</text>
</comment>
<comment type="similarity">
    <text evidence="2">Belongs to the globin family.</text>
</comment>
<reference evidence="4" key="1">
    <citation type="journal article" date="2004" name="Protein Sci.">
        <title>Structure and function of the Gondwanian hemoglobin of Pseudaphritis urvillii, a primitive notothenioid fish of temperate latitudes.</title>
        <authorList>
            <person name="Verde C."/>
            <person name="Howes B.D."/>
            <person name="De Rosa M.C."/>
            <person name="Raiola L."/>
            <person name="Smulevich G."/>
            <person name="Williams R."/>
            <person name="Giardina B."/>
            <person name="Parisi E."/>
            <person name="Di Prisco G."/>
        </authorList>
    </citation>
    <scope>PROTEIN SEQUENCE</scope>
    <scope>SUBUNIT</scope>
    <source>
        <tissue evidence="3">Erythrocyte</tissue>
    </source>
</reference>
<feature type="chain" id="PRO_0000053080" description="Hemoglobin subunit beta-2">
    <location>
        <begin position="1"/>
        <end position="146"/>
    </location>
</feature>
<feature type="domain" description="Globin" evidence="2">
    <location>
        <begin position="2"/>
        <end position="146"/>
    </location>
</feature>
<feature type="binding site" description="distal binding residue" evidence="1 2">
    <location>
        <position position="63"/>
    </location>
    <ligand>
        <name>heme b</name>
        <dbReference type="ChEBI" id="CHEBI:60344"/>
    </ligand>
    <ligandPart>
        <name>Fe</name>
        <dbReference type="ChEBI" id="CHEBI:18248"/>
    </ligandPart>
</feature>
<feature type="binding site" description="proximal binding residue" evidence="1 2">
    <location>
        <position position="92"/>
    </location>
    <ligand>
        <name>heme b</name>
        <dbReference type="ChEBI" id="CHEBI:60344"/>
    </ligand>
    <ligandPart>
        <name>Fe</name>
        <dbReference type="ChEBI" id="CHEBI:18248"/>
    </ligandPart>
</feature>
<protein>
    <recommendedName>
        <fullName>Hemoglobin subunit beta-2</fullName>
    </recommendedName>
    <alternativeName>
        <fullName>Beta-2-globin</fullName>
    </alternativeName>
    <alternativeName>
        <fullName>Hemoglobin beta-2 chain</fullName>
    </alternativeName>
</protein>
<gene>
    <name type="primary">hbb2</name>
</gene>
<sequence>VEWTDFERATIKDIFSKIEYEVVGPAALARCLVVYPWTQRYFGKFGNLYNAEAITGNPMISKHGTTILHGLDRAVKNMDDIKNTYAELSVLHSETLHVDPDNFKLLSDCLTIVVAGQLGKDFTGEVQAAFQKFLAVVVSSLGRQYH</sequence>
<dbReference type="SMR" id="P83625"/>
<dbReference type="GO" id="GO:0072562">
    <property type="term" value="C:blood microparticle"/>
    <property type="evidence" value="ECO:0007669"/>
    <property type="project" value="TreeGrafter"/>
</dbReference>
<dbReference type="GO" id="GO:0031838">
    <property type="term" value="C:haptoglobin-hemoglobin complex"/>
    <property type="evidence" value="ECO:0007669"/>
    <property type="project" value="TreeGrafter"/>
</dbReference>
<dbReference type="GO" id="GO:0005833">
    <property type="term" value="C:hemoglobin complex"/>
    <property type="evidence" value="ECO:0000314"/>
    <property type="project" value="UniProtKB"/>
</dbReference>
<dbReference type="GO" id="GO:0031720">
    <property type="term" value="F:haptoglobin binding"/>
    <property type="evidence" value="ECO:0007669"/>
    <property type="project" value="TreeGrafter"/>
</dbReference>
<dbReference type="GO" id="GO:0020037">
    <property type="term" value="F:heme binding"/>
    <property type="evidence" value="ECO:0007669"/>
    <property type="project" value="InterPro"/>
</dbReference>
<dbReference type="GO" id="GO:0046872">
    <property type="term" value="F:metal ion binding"/>
    <property type="evidence" value="ECO:0007669"/>
    <property type="project" value="UniProtKB-KW"/>
</dbReference>
<dbReference type="GO" id="GO:0043177">
    <property type="term" value="F:organic acid binding"/>
    <property type="evidence" value="ECO:0007669"/>
    <property type="project" value="TreeGrafter"/>
</dbReference>
<dbReference type="GO" id="GO:0019825">
    <property type="term" value="F:oxygen binding"/>
    <property type="evidence" value="ECO:0007669"/>
    <property type="project" value="InterPro"/>
</dbReference>
<dbReference type="GO" id="GO:0005344">
    <property type="term" value="F:oxygen carrier activity"/>
    <property type="evidence" value="ECO:0000314"/>
    <property type="project" value="UniProtKB"/>
</dbReference>
<dbReference type="GO" id="GO:0004601">
    <property type="term" value="F:peroxidase activity"/>
    <property type="evidence" value="ECO:0007669"/>
    <property type="project" value="TreeGrafter"/>
</dbReference>
<dbReference type="GO" id="GO:0042744">
    <property type="term" value="P:hydrogen peroxide catabolic process"/>
    <property type="evidence" value="ECO:0007669"/>
    <property type="project" value="TreeGrafter"/>
</dbReference>
<dbReference type="GO" id="GO:0015671">
    <property type="term" value="P:oxygen transport"/>
    <property type="evidence" value="ECO:0000314"/>
    <property type="project" value="UniProtKB"/>
</dbReference>
<dbReference type="CDD" id="cd08925">
    <property type="entry name" value="Hb-beta-like"/>
    <property type="match status" value="1"/>
</dbReference>
<dbReference type="FunFam" id="1.10.490.10:FF:000001">
    <property type="entry name" value="Hemoglobin subunit beta"/>
    <property type="match status" value="1"/>
</dbReference>
<dbReference type="Gene3D" id="1.10.490.10">
    <property type="entry name" value="Globins"/>
    <property type="match status" value="1"/>
</dbReference>
<dbReference type="InterPro" id="IPR000971">
    <property type="entry name" value="Globin"/>
</dbReference>
<dbReference type="InterPro" id="IPR009050">
    <property type="entry name" value="Globin-like_sf"/>
</dbReference>
<dbReference type="InterPro" id="IPR012292">
    <property type="entry name" value="Globin/Proto"/>
</dbReference>
<dbReference type="InterPro" id="IPR002337">
    <property type="entry name" value="Hemoglobin_b"/>
</dbReference>
<dbReference type="InterPro" id="IPR050056">
    <property type="entry name" value="Hemoglobin_oxygen_transport"/>
</dbReference>
<dbReference type="PANTHER" id="PTHR11442">
    <property type="entry name" value="HEMOGLOBIN FAMILY MEMBER"/>
    <property type="match status" value="1"/>
</dbReference>
<dbReference type="PANTHER" id="PTHR11442:SF7">
    <property type="entry name" value="HEMOGLOBIN SUBUNIT EPSILON"/>
    <property type="match status" value="1"/>
</dbReference>
<dbReference type="Pfam" id="PF00042">
    <property type="entry name" value="Globin"/>
    <property type="match status" value="1"/>
</dbReference>
<dbReference type="PRINTS" id="PR00814">
    <property type="entry name" value="BETAHAEM"/>
</dbReference>
<dbReference type="SUPFAM" id="SSF46458">
    <property type="entry name" value="Globin-like"/>
    <property type="match status" value="1"/>
</dbReference>
<dbReference type="PROSITE" id="PS01033">
    <property type="entry name" value="GLOBIN"/>
    <property type="match status" value="1"/>
</dbReference>
<keyword id="KW-0903">Direct protein sequencing</keyword>
<keyword id="KW-0349">Heme</keyword>
<keyword id="KW-0408">Iron</keyword>
<keyword id="KW-0479">Metal-binding</keyword>
<keyword id="KW-0561">Oxygen transport</keyword>
<keyword id="KW-0813">Transport</keyword>
<accession>P83625</accession>
<proteinExistence type="evidence at protein level"/>
<name>HBB2_PSEUR</name>